<accession>Q4JB73</accession>
<keyword id="KW-0378">Hydrolase</keyword>
<keyword id="KW-0479">Metal-binding</keyword>
<keyword id="KW-0482">Metalloprotease</keyword>
<keyword id="KW-0645">Protease</keyword>
<keyword id="KW-1185">Reference proteome</keyword>
<keyword id="KW-0862">Zinc</keyword>
<proteinExistence type="inferred from homology"/>
<reference key="1">
    <citation type="journal article" date="2005" name="J. Bacteriol.">
        <title>The genome of Sulfolobus acidocaldarius, a model organism of the Crenarchaeota.</title>
        <authorList>
            <person name="Chen L."/>
            <person name="Bruegger K."/>
            <person name="Skovgaard M."/>
            <person name="Redder P."/>
            <person name="She Q."/>
            <person name="Torarinsson E."/>
            <person name="Greve B."/>
            <person name="Awayez M."/>
            <person name="Zibat A."/>
            <person name="Klenk H.-P."/>
            <person name="Garrett R.A."/>
        </authorList>
    </citation>
    <scope>NUCLEOTIDE SEQUENCE [LARGE SCALE GENOMIC DNA]</scope>
    <source>
        <strain>ATCC 33909 / DSM 639 / JCM 8929 / NBRC 15157 / NCIMB 11770</strain>
    </source>
</reference>
<dbReference type="EC" id="3.4.-.-" evidence="1"/>
<dbReference type="EMBL" id="CP000077">
    <property type="protein sequence ID" value="AAY79956.1"/>
    <property type="molecule type" value="Genomic_DNA"/>
</dbReference>
<dbReference type="RefSeq" id="WP_011277458.1">
    <property type="nucleotide sequence ID" value="NC_007181.1"/>
</dbReference>
<dbReference type="SMR" id="Q4JB73"/>
<dbReference type="STRING" id="330779.Saci_0564"/>
<dbReference type="GeneID" id="14551086"/>
<dbReference type="KEGG" id="sai:Saci_0564"/>
<dbReference type="PATRIC" id="fig|330779.12.peg.545"/>
<dbReference type="eggNOG" id="arCOG00458">
    <property type="taxonomic scope" value="Archaea"/>
</dbReference>
<dbReference type="HOGENOM" id="CLU_108521_1_0_2"/>
<dbReference type="Proteomes" id="UP000001018">
    <property type="component" value="Chromosome"/>
</dbReference>
<dbReference type="GO" id="GO:0008237">
    <property type="term" value="F:metallopeptidase activity"/>
    <property type="evidence" value="ECO:0007669"/>
    <property type="project" value="UniProtKB-UniRule"/>
</dbReference>
<dbReference type="GO" id="GO:0008270">
    <property type="term" value="F:zinc ion binding"/>
    <property type="evidence" value="ECO:0007669"/>
    <property type="project" value="UniProtKB-UniRule"/>
</dbReference>
<dbReference type="GO" id="GO:0006508">
    <property type="term" value="P:proteolysis"/>
    <property type="evidence" value="ECO:0007669"/>
    <property type="project" value="UniProtKB-UniRule"/>
</dbReference>
<dbReference type="CDD" id="cd11375">
    <property type="entry name" value="Peptidase_M54"/>
    <property type="match status" value="1"/>
</dbReference>
<dbReference type="Gene3D" id="3.40.390.10">
    <property type="entry name" value="Collagenase (Catalytic Domain)"/>
    <property type="match status" value="1"/>
</dbReference>
<dbReference type="HAMAP" id="MF_01842">
    <property type="entry name" value="Archaemetzincin"/>
    <property type="match status" value="1"/>
</dbReference>
<dbReference type="InterPro" id="IPR024079">
    <property type="entry name" value="MetalloPept_cat_dom_sf"/>
</dbReference>
<dbReference type="InterPro" id="IPR012962">
    <property type="entry name" value="Pept_M54_archaemetzincn"/>
</dbReference>
<dbReference type="InterPro" id="IPR012091">
    <property type="entry name" value="Pept_M54_archaemetzncn_arc/bac"/>
</dbReference>
<dbReference type="NCBIfam" id="NF033823">
    <property type="entry name" value="archmetzin"/>
    <property type="match status" value="1"/>
</dbReference>
<dbReference type="PANTHER" id="PTHR15910">
    <property type="entry name" value="ARCHAEMETZINCIN"/>
    <property type="match status" value="1"/>
</dbReference>
<dbReference type="PANTHER" id="PTHR15910:SF1">
    <property type="entry name" value="ARCHAEMETZINCIN-2"/>
    <property type="match status" value="1"/>
</dbReference>
<dbReference type="Pfam" id="PF07998">
    <property type="entry name" value="Peptidase_M54"/>
    <property type="match status" value="1"/>
</dbReference>
<dbReference type="PIRSF" id="PIRSF005785">
    <property type="entry name" value="Zn-prot_arch"/>
    <property type="match status" value="1"/>
</dbReference>
<dbReference type="SUPFAM" id="SSF55486">
    <property type="entry name" value="Metalloproteases ('zincins'), catalytic domain"/>
    <property type="match status" value="1"/>
</dbReference>
<name>AMZA_SULAC</name>
<protein>
    <recommendedName>
        <fullName evidence="1">Archaemetzincin</fullName>
        <ecNumber evidence="1">3.4.-.-</ecNumber>
    </recommendedName>
</protein>
<gene>
    <name evidence="1" type="primary">amzA</name>
    <name type="ordered locus">Saci_0564</name>
</gene>
<sequence>MYKVLLIRLTNLDNLIVNSVRTHLMNMGFEVEVNEEIFHLNAELFNWERWQYNADKLLQLVKLTFERYPYDAVIGIGEADGFSDGLNFVFGLSTKKYGLVFLSRLKEEFYGRVINSSLYIERTLKEVTHELGHTLGLGHCNNKECVMNFSVSVEDVDKKGKYFCTSCSDKLNINNKS</sequence>
<feature type="chain" id="PRO_0000159635" description="Archaemetzincin">
    <location>
        <begin position="1"/>
        <end position="177"/>
    </location>
</feature>
<feature type="active site" description="Proton acceptor" evidence="1">
    <location>
        <position position="130"/>
    </location>
</feature>
<feature type="binding site" evidence="1">
    <location>
        <position position="129"/>
    </location>
    <ligand>
        <name>Zn(2+)</name>
        <dbReference type="ChEBI" id="CHEBI:29105"/>
        <label>1</label>
        <note>catalytic</note>
    </ligand>
</feature>
<feature type="binding site" evidence="1">
    <location>
        <position position="133"/>
    </location>
    <ligand>
        <name>Zn(2+)</name>
        <dbReference type="ChEBI" id="CHEBI:29105"/>
        <label>1</label>
        <note>catalytic</note>
    </ligand>
</feature>
<feature type="binding site" evidence="1">
    <location>
        <position position="139"/>
    </location>
    <ligand>
        <name>Zn(2+)</name>
        <dbReference type="ChEBI" id="CHEBI:29105"/>
        <label>1</label>
        <note>catalytic</note>
    </ligand>
</feature>
<feature type="binding site" evidence="1">
    <location>
        <position position="140"/>
    </location>
    <ligand>
        <name>Zn(2+)</name>
        <dbReference type="ChEBI" id="CHEBI:29105"/>
        <label>2</label>
    </ligand>
</feature>
<feature type="binding site" evidence="1">
    <location>
        <position position="145"/>
    </location>
    <ligand>
        <name>Zn(2+)</name>
        <dbReference type="ChEBI" id="CHEBI:29105"/>
        <label>2</label>
    </ligand>
</feature>
<feature type="binding site" evidence="1">
    <location>
        <position position="164"/>
    </location>
    <ligand>
        <name>Zn(2+)</name>
        <dbReference type="ChEBI" id="CHEBI:29105"/>
        <label>2</label>
    </ligand>
</feature>
<feature type="binding site" evidence="1">
    <location>
        <position position="167"/>
    </location>
    <ligand>
        <name>Zn(2+)</name>
        <dbReference type="ChEBI" id="CHEBI:29105"/>
        <label>2</label>
    </ligand>
</feature>
<evidence type="ECO:0000255" key="1">
    <source>
        <dbReference type="HAMAP-Rule" id="MF_01842"/>
    </source>
</evidence>
<organism>
    <name type="scientific">Sulfolobus acidocaldarius (strain ATCC 33909 / DSM 639 / JCM 8929 / NBRC 15157 / NCIMB 11770)</name>
    <dbReference type="NCBI Taxonomy" id="330779"/>
    <lineage>
        <taxon>Archaea</taxon>
        <taxon>Thermoproteota</taxon>
        <taxon>Thermoprotei</taxon>
        <taxon>Sulfolobales</taxon>
        <taxon>Sulfolobaceae</taxon>
        <taxon>Sulfolobus</taxon>
    </lineage>
</organism>
<comment type="function">
    <text evidence="1">Probable zinc metalloprotease whose natural substrate is unknown.</text>
</comment>
<comment type="cofactor">
    <cofactor evidence="1">
        <name>Zn(2+)</name>
        <dbReference type="ChEBI" id="CHEBI:29105"/>
    </cofactor>
    <text evidence="1">Binds 2 Zn(2+) ions per subunit. One is catalytic, whereas the other seems to have a structural role.</text>
</comment>
<comment type="subunit">
    <text evidence="1">Monomer.</text>
</comment>
<comment type="similarity">
    <text evidence="1">Belongs to the peptidase M54 family.</text>
</comment>